<organism>
    <name type="scientific">Mus musculus</name>
    <name type="common">Mouse</name>
    <dbReference type="NCBI Taxonomy" id="10090"/>
    <lineage>
        <taxon>Eukaryota</taxon>
        <taxon>Metazoa</taxon>
        <taxon>Chordata</taxon>
        <taxon>Craniata</taxon>
        <taxon>Vertebrata</taxon>
        <taxon>Euteleostomi</taxon>
        <taxon>Mammalia</taxon>
        <taxon>Eutheria</taxon>
        <taxon>Euarchontoglires</taxon>
        <taxon>Glires</taxon>
        <taxon>Rodentia</taxon>
        <taxon>Myomorpha</taxon>
        <taxon>Muroidea</taxon>
        <taxon>Muridae</taxon>
        <taxon>Murinae</taxon>
        <taxon>Mus</taxon>
        <taxon>Mus</taxon>
    </lineage>
</organism>
<keyword id="KW-0025">Alternative splicing</keyword>
<keyword id="KW-0963">Cytoplasm</keyword>
<keyword id="KW-0413">Isomerase</keyword>
<keyword id="KW-0496">Mitochondrion</keyword>
<keyword id="KW-0507">mRNA processing</keyword>
<keyword id="KW-0508">mRNA splicing</keyword>
<keyword id="KW-0539">Nucleus</keyword>
<keyword id="KW-0597">Phosphoprotein</keyword>
<keyword id="KW-1185">Reference proteome</keyword>
<keyword id="KW-0809">Transit peptide</keyword>
<keyword id="KW-0819">tRNA processing</keyword>
<proteinExistence type="evidence at protein level"/>
<name>PUS1_MOUSE</name>
<reference key="1">
    <citation type="journal article" date="1999" name="RNA">
        <title>Cloning and characterization of a mammalian pseudouridine synthase.</title>
        <authorList>
            <person name="Chen J."/>
            <person name="Patton J.R."/>
        </authorList>
    </citation>
    <scope>NUCLEOTIDE SEQUENCE [MRNA] (ISOFORM 2)</scope>
    <scope>FUNCTION</scope>
    <scope>CATALYTIC ACTIVITY</scope>
</reference>
<reference key="2">
    <citation type="journal article" date="2000" name="Biochem. J.">
        <title>Mouse pseudouridine synthase 1: gene structure and alternative splicing of pre-mRNA.</title>
        <authorList>
            <person name="Chen J."/>
            <person name="Patton J.R."/>
        </authorList>
    </citation>
    <scope>NUCLEOTIDE SEQUENCE [GENOMIC DNA] (ISOFORMS 2 AND 3)</scope>
    <scope>FUNCTION</scope>
    <scope>ALTERNATIVE SPLICING (ISOFORM 4)</scope>
    <source>
        <strain>129/SvJ</strain>
    </source>
</reference>
<reference key="3">
    <citation type="submission" date="2000-04" db="EMBL/GenBank/DDBJ databases">
        <title>Isolation of full-length cDNA clones from mouse brain cDNA library made by oligo-capping method.</title>
        <authorList>
            <person name="Osada N."/>
            <person name="Kusuda J."/>
            <person name="Tanuma R."/>
            <person name="Ito A."/>
            <person name="Hirata M."/>
            <person name="Sugano S."/>
            <person name="Hashimoto K."/>
        </authorList>
    </citation>
    <scope>NUCLEOTIDE SEQUENCE [LARGE SCALE MRNA] (ISOFORM 3)</scope>
    <source>
        <strain>C57BL/6J</strain>
        <tissue>Brain</tissue>
    </source>
</reference>
<reference key="4">
    <citation type="journal article" date="2005" name="Science">
        <title>The transcriptional landscape of the mammalian genome.</title>
        <authorList>
            <person name="Carninci P."/>
            <person name="Kasukawa T."/>
            <person name="Katayama S."/>
            <person name="Gough J."/>
            <person name="Frith M.C."/>
            <person name="Maeda N."/>
            <person name="Oyama R."/>
            <person name="Ravasi T."/>
            <person name="Lenhard B."/>
            <person name="Wells C."/>
            <person name="Kodzius R."/>
            <person name="Shimokawa K."/>
            <person name="Bajic V.B."/>
            <person name="Brenner S.E."/>
            <person name="Batalov S."/>
            <person name="Forrest A.R."/>
            <person name="Zavolan M."/>
            <person name="Davis M.J."/>
            <person name="Wilming L.G."/>
            <person name="Aidinis V."/>
            <person name="Allen J.E."/>
            <person name="Ambesi-Impiombato A."/>
            <person name="Apweiler R."/>
            <person name="Aturaliya R.N."/>
            <person name="Bailey T.L."/>
            <person name="Bansal M."/>
            <person name="Baxter L."/>
            <person name="Beisel K.W."/>
            <person name="Bersano T."/>
            <person name="Bono H."/>
            <person name="Chalk A.M."/>
            <person name="Chiu K.P."/>
            <person name="Choudhary V."/>
            <person name="Christoffels A."/>
            <person name="Clutterbuck D.R."/>
            <person name="Crowe M.L."/>
            <person name="Dalla E."/>
            <person name="Dalrymple B.P."/>
            <person name="de Bono B."/>
            <person name="Della Gatta G."/>
            <person name="di Bernardo D."/>
            <person name="Down T."/>
            <person name="Engstrom P."/>
            <person name="Fagiolini M."/>
            <person name="Faulkner G."/>
            <person name="Fletcher C.F."/>
            <person name="Fukushima T."/>
            <person name="Furuno M."/>
            <person name="Futaki S."/>
            <person name="Gariboldi M."/>
            <person name="Georgii-Hemming P."/>
            <person name="Gingeras T.R."/>
            <person name="Gojobori T."/>
            <person name="Green R.E."/>
            <person name="Gustincich S."/>
            <person name="Harbers M."/>
            <person name="Hayashi Y."/>
            <person name="Hensch T.K."/>
            <person name="Hirokawa N."/>
            <person name="Hill D."/>
            <person name="Huminiecki L."/>
            <person name="Iacono M."/>
            <person name="Ikeo K."/>
            <person name="Iwama A."/>
            <person name="Ishikawa T."/>
            <person name="Jakt M."/>
            <person name="Kanapin A."/>
            <person name="Katoh M."/>
            <person name="Kawasawa Y."/>
            <person name="Kelso J."/>
            <person name="Kitamura H."/>
            <person name="Kitano H."/>
            <person name="Kollias G."/>
            <person name="Krishnan S.P."/>
            <person name="Kruger A."/>
            <person name="Kummerfeld S.K."/>
            <person name="Kurochkin I.V."/>
            <person name="Lareau L.F."/>
            <person name="Lazarevic D."/>
            <person name="Lipovich L."/>
            <person name="Liu J."/>
            <person name="Liuni S."/>
            <person name="McWilliam S."/>
            <person name="Madan Babu M."/>
            <person name="Madera M."/>
            <person name="Marchionni L."/>
            <person name="Matsuda H."/>
            <person name="Matsuzawa S."/>
            <person name="Miki H."/>
            <person name="Mignone F."/>
            <person name="Miyake S."/>
            <person name="Morris K."/>
            <person name="Mottagui-Tabar S."/>
            <person name="Mulder N."/>
            <person name="Nakano N."/>
            <person name="Nakauchi H."/>
            <person name="Ng P."/>
            <person name="Nilsson R."/>
            <person name="Nishiguchi S."/>
            <person name="Nishikawa S."/>
            <person name="Nori F."/>
            <person name="Ohara O."/>
            <person name="Okazaki Y."/>
            <person name="Orlando V."/>
            <person name="Pang K.C."/>
            <person name="Pavan W.J."/>
            <person name="Pavesi G."/>
            <person name="Pesole G."/>
            <person name="Petrovsky N."/>
            <person name="Piazza S."/>
            <person name="Reed J."/>
            <person name="Reid J.F."/>
            <person name="Ring B.Z."/>
            <person name="Ringwald M."/>
            <person name="Rost B."/>
            <person name="Ruan Y."/>
            <person name="Salzberg S.L."/>
            <person name="Sandelin A."/>
            <person name="Schneider C."/>
            <person name="Schoenbach C."/>
            <person name="Sekiguchi K."/>
            <person name="Semple C.A."/>
            <person name="Seno S."/>
            <person name="Sessa L."/>
            <person name="Sheng Y."/>
            <person name="Shibata Y."/>
            <person name="Shimada H."/>
            <person name="Shimada K."/>
            <person name="Silva D."/>
            <person name="Sinclair B."/>
            <person name="Sperling S."/>
            <person name="Stupka E."/>
            <person name="Sugiura K."/>
            <person name="Sultana R."/>
            <person name="Takenaka Y."/>
            <person name="Taki K."/>
            <person name="Tammoja K."/>
            <person name="Tan S.L."/>
            <person name="Tang S."/>
            <person name="Taylor M.S."/>
            <person name="Tegner J."/>
            <person name="Teichmann S.A."/>
            <person name="Ueda H.R."/>
            <person name="van Nimwegen E."/>
            <person name="Verardo R."/>
            <person name="Wei C.L."/>
            <person name="Yagi K."/>
            <person name="Yamanishi H."/>
            <person name="Zabarovsky E."/>
            <person name="Zhu S."/>
            <person name="Zimmer A."/>
            <person name="Hide W."/>
            <person name="Bult C."/>
            <person name="Grimmond S.M."/>
            <person name="Teasdale R.D."/>
            <person name="Liu E.T."/>
            <person name="Brusic V."/>
            <person name="Quackenbush J."/>
            <person name="Wahlestedt C."/>
            <person name="Mattick J.S."/>
            <person name="Hume D.A."/>
            <person name="Kai C."/>
            <person name="Sasaki D."/>
            <person name="Tomaru Y."/>
            <person name="Fukuda S."/>
            <person name="Kanamori-Katayama M."/>
            <person name="Suzuki M."/>
            <person name="Aoki J."/>
            <person name="Arakawa T."/>
            <person name="Iida J."/>
            <person name="Imamura K."/>
            <person name="Itoh M."/>
            <person name="Kato T."/>
            <person name="Kawaji H."/>
            <person name="Kawagashira N."/>
            <person name="Kawashima T."/>
            <person name="Kojima M."/>
            <person name="Kondo S."/>
            <person name="Konno H."/>
            <person name="Nakano K."/>
            <person name="Ninomiya N."/>
            <person name="Nishio T."/>
            <person name="Okada M."/>
            <person name="Plessy C."/>
            <person name="Shibata K."/>
            <person name="Shiraki T."/>
            <person name="Suzuki S."/>
            <person name="Tagami M."/>
            <person name="Waki K."/>
            <person name="Watahiki A."/>
            <person name="Okamura-Oho Y."/>
            <person name="Suzuki H."/>
            <person name="Kawai J."/>
            <person name="Hayashizaki Y."/>
        </authorList>
    </citation>
    <scope>NUCLEOTIDE SEQUENCE [LARGE SCALE MRNA] (ISOFORMS 1 AND 4)</scope>
    <source>
        <strain>C57BL/6J</strain>
        <strain>NOD</strain>
        <tissue>Dendritic cell</tissue>
        <tissue>Spinal cord</tissue>
    </source>
</reference>
<reference key="5">
    <citation type="journal article" date="2004" name="Genome Res.">
        <title>The status, quality, and expansion of the NIH full-length cDNA project: the Mammalian Gene Collection (MGC).</title>
        <authorList>
            <consortium name="The MGC Project Team"/>
        </authorList>
    </citation>
    <scope>NUCLEOTIDE SEQUENCE [LARGE SCALE MRNA] (ISOFORM 1)</scope>
    <source>
        <strain>Czech II</strain>
        <strain>FVB/N</strain>
        <tissue>Mammary gland</tissue>
    </source>
</reference>
<reference key="6">
    <citation type="journal article" date="2004" name="Mol. Cell">
        <title>Regulation of nuclear receptor activity by a pseudouridine synthase through posttranscriptional modification of steroid receptor RNA activator.</title>
        <authorList>
            <person name="Zhao X."/>
            <person name="Patton J.R."/>
            <person name="Davis S.L."/>
            <person name="Florence B."/>
            <person name="Ames S.J."/>
            <person name="Spanjaard R.A."/>
        </authorList>
    </citation>
    <scope>FUNCTION</scope>
    <scope>CATALYTIC ACTIVITY</scope>
    <scope>IDENTIFICATION IN A COMPLEX WITH RARG AND SRA1</scope>
</reference>
<reference key="7">
    <citation type="journal article" date="2010" name="Cell">
        <title>A tissue-specific atlas of mouse protein phosphorylation and expression.</title>
        <authorList>
            <person name="Huttlin E.L."/>
            <person name="Jedrychowski M.P."/>
            <person name="Elias J.E."/>
            <person name="Goswami T."/>
            <person name="Rad R."/>
            <person name="Beausoleil S.A."/>
            <person name="Villen J."/>
            <person name="Haas W."/>
            <person name="Sowa M.E."/>
            <person name="Gygi S.P."/>
        </authorList>
    </citation>
    <scope>PHOSPHORYLATION [LARGE SCALE ANALYSIS] AT SER-416 AND THR-422</scope>
    <scope>IDENTIFICATION BY MASS SPECTROMETRY [LARGE SCALE ANALYSIS]</scope>
    <source>
        <tissue>Brain</tissue>
        <tissue>Kidney</tissue>
        <tissue>Lung</tissue>
    </source>
</reference>
<reference key="8">
    <citation type="journal article" date="2016" name="Sci. Rep.">
        <title>Pseudouridine synthase 1 deficient mice, a model for Mitochondrial Myopathy with Sideroblastic Anemia, exhibit muscle morphology and physiology alterations.</title>
        <authorList>
            <person name="Mangum J.E."/>
            <person name="Hardee J.P."/>
            <person name="Fix D.K."/>
            <person name="Puppa M.J."/>
            <person name="Elkes J."/>
            <person name="Altomare D."/>
            <person name="Bykhovskaya Y."/>
            <person name="Campagna D.R."/>
            <person name="Schmidt P.J."/>
            <person name="Sendamarai A.K."/>
            <person name="Lidov H.G."/>
            <person name="Barlow S.C."/>
            <person name="Fischel-Ghodsian N."/>
            <person name="Fleming M.D."/>
            <person name="Carson J.A."/>
            <person name="Patton J.R."/>
        </authorList>
    </citation>
    <scope>FUNCTION</scope>
    <scope>CATALYTIC ACTIVITY</scope>
    <scope>DISRUPTION PHENOTYPE</scope>
</reference>
<protein>
    <recommendedName>
        <fullName evidence="11">Pseudouridylate synthase 1 homolog</fullName>
        <ecNumber evidence="4 6">5.4.99.-</ecNumber>
    </recommendedName>
    <alternativeName>
        <fullName evidence="11">tRNA pseudouridine synthase 1</fullName>
        <ecNumber evidence="4">5.4.99.12</ecNumber>
    </alternativeName>
    <alternativeName>
        <fullName>tRNA pseudouridine(38-40) synthase</fullName>
    </alternativeName>
    <alternativeName>
        <fullName>tRNA pseudouridylate synthase I</fullName>
    </alternativeName>
    <alternativeName>
        <fullName>tRNA-uridine isomerase I</fullName>
    </alternativeName>
</protein>
<comment type="function">
    <text evidence="1 4 6 7">Pseudouridylate synthase that catalyzes pseudouridylation of tRNAs and mRNAs (PubMed:10094309, PubMed:15327771, PubMed:27197761). Acts on positions 27/28 in the anticodon stem and also positions 34 and 36 in the anticodon of an intron containing tRNA (PubMed:10094309). Also catalyzes pseudouridylation of mRNAs: mediates pseudouridylation of mRNAs with the consensus sequence 5'-UGUAG-3' (By similarity). Acts as a regulator of pre-mRNA splicing by mediating pseudouridylation of pre-mRNAs at locations associated with alternatively spliced regions (By similarity). Pseudouridylation of pre-mRNAs near splice sites directly regulates mRNA splicing and mRNA 3'-end processing (By similarity). Involved in regulation of nuclear receptor activity through pseudouridylation of SRA1 mRNA (PubMed:15327771).</text>
</comment>
<comment type="function">
    <molecule>Isoform 3</molecule>
    <text evidence="5">Does not form pseudouridine when expressed in vitro.</text>
</comment>
<comment type="function">
    <molecule>Isoform 4</molecule>
    <text evidence="5">Does not form pseudouridine when expressed in vitro.</text>
</comment>
<comment type="catalytic activity">
    <reaction evidence="4 6 7">
        <text>a uridine in tRNA = a pseudouridine in tRNA</text>
        <dbReference type="Rhea" id="RHEA:54572"/>
        <dbReference type="Rhea" id="RHEA-COMP:13339"/>
        <dbReference type="Rhea" id="RHEA-COMP:13934"/>
        <dbReference type="ChEBI" id="CHEBI:65314"/>
        <dbReference type="ChEBI" id="CHEBI:65315"/>
    </reaction>
</comment>
<comment type="catalytic activity">
    <reaction evidence="4">
        <text>uridine(38/39/40) in tRNA = pseudouridine(38/39/40) in tRNA</text>
        <dbReference type="Rhea" id="RHEA:22376"/>
        <dbReference type="Rhea" id="RHEA-COMP:10085"/>
        <dbReference type="Rhea" id="RHEA-COMP:10087"/>
        <dbReference type="ChEBI" id="CHEBI:65314"/>
        <dbReference type="ChEBI" id="CHEBI:65315"/>
        <dbReference type="EC" id="5.4.99.12"/>
    </reaction>
</comment>
<comment type="catalytic activity">
    <reaction evidence="1">
        <text>a uridine in mRNA = a pseudouridine in mRNA</text>
        <dbReference type="Rhea" id="RHEA:56644"/>
        <dbReference type="Rhea" id="RHEA-COMP:14658"/>
        <dbReference type="Rhea" id="RHEA-COMP:14659"/>
        <dbReference type="ChEBI" id="CHEBI:65314"/>
        <dbReference type="ChEBI" id="CHEBI:65315"/>
    </reaction>
</comment>
<comment type="subunit">
    <text evidence="1 6">Monomer (By similarity). Forms a complex with RARG and the SRA1 RNA in the nucleus (PubMed:15327771).</text>
</comment>
<comment type="subcellular location">
    <subcellularLocation>
        <location evidence="1">Nucleus</location>
    </subcellularLocation>
    <subcellularLocation>
        <location evidence="1">Cytoplasm</location>
    </subcellularLocation>
    <subcellularLocation>
        <location evidence="1">Mitochondrion</location>
    </subcellularLocation>
</comment>
<comment type="alternative products">
    <event type="alternative splicing"/>
    <isoform>
        <id>Q9WU56-1</id>
        <name>1</name>
        <sequence type="displayed"/>
    </isoform>
    <isoform>
        <id>Q9WU56-2</id>
        <name>2</name>
        <sequence type="described" ref="VSP_020114"/>
    </isoform>
    <isoform>
        <id>Q9WU56-3</id>
        <name>3</name>
        <sequence type="described" ref="VSP_020114 VSP_021792"/>
    </isoform>
    <isoform>
        <id>Q9WU56-4</id>
        <name>4</name>
        <sequence type="described" ref="VSP_020114 VSP_021791"/>
    </isoform>
</comment>
<comment type="disruption phenotype">
    <text evidence="7">Impaired muscle morphology and physiology leading to impaired exercise capacity (PubMed:27197761). Mice were born at the expected Mendelian frequency (PubMed:27197761). At 14 weeks, mice display reduced exercise capacity, probably caused by alterations in muscle metabolism related to mitochondrial content and oxidative capacity (PubMed:27197761). Cells show reduced pseudouridylation of cytoplasmic and mitochondrial tRNAs (PubMed:27197761).</text>
</comment>
<comment type="similarity">
    <text evidence="11">Belongs to the tRNA pseudouridine synthase TruA family.</text>
</comment>
<comment type="sequence caution" evidence="11">
    <conflict type="frameshift">
        <sequence resource="EMBL-CDS" id="BAA95047"/>
    </conflict>
</comment>
<comment type="sequence caution" evidence="11">
    <conflict type="erroneous initiation">
        <sequence resource="EMBL-CDS" id="BAC40817"/>
    </conflict>
</comment>
<evidence type="ECO:0000250" key="1">
    <source>
        <dbReference type="UniProtKB" id="Q9Y606"/>
    </source>
</evidence>
<evidence type="ECO:0000255" key="2"/>
<evidence type="ECO:0000256" key="3">
    <source>
        <dbReference type="SAM" id="MobiDB-lite"/>
    </source>
</evidence>
<evidence type="ECO:0000269" key="4">
    <source>
    </source>
</evidence>
<evidence type="ECO:0000269" key="5">
    <source>
    </source>
</evidence>
<evidence type="ECO:0000269" key="6">
    <source>
    </source>
</evidence>
<evidence type="ECO:0000269" key="7">
    <source>
    </source>
</evidence>
<evidence type="ECO:0000303" key="8">
    <source>
    </source>
</evidence>
<evidence type="ECO:0000303" key="9">
    <source>
    </source>
</evidence>
<evidence type="ECO:0000303" key="10">
    <source ref="3"/>
</evidence>
<evidence type="ECO:0000305" key="11"/>
<evidence type="ECO:0000312" key="12">
    <source>
        <dbReference type="MGI" id="MGI:1929237"/>
    </source>
</evidence>
<evidence type="ECO:0007744" key="13">
    <source>
    </source>
</evidence>
<gene>
    <name evidence="8 12" type="primary">Pus1</name>
    <name type="ORF">MNCb-0873</name>
</gene>
<feature type="transit peptide" description="Mitochondrion" evidence="2">
    <location>
        <begin position="1"/>
        <end status="unknown"/>
    </location>
</feature>
<feature type="chain" id="PRO_0000057518" description="Pseudouridylate synthase 1 homolog">
    <location>
        <begin status="unknown"/>
        <end position="423"/>
    </location>
</feature>
<feature type="region of interest" description="Disordered" evidence="3">
    <location>
        <begin position="32"/>
        <end position="75"/>
    </location>
</feature>
<feature type="region of interest" description="Disordered" evidence="3">
    <location>
        <begin position="403"/>
        <end position="423"/>
    </location>
</feature>
<feature type="compositionally biased region" description="Basic and acidic residues" evidence="3">
    <location>
        <begin position="57"/>
        <end position="68"/>
    </location>
</feature>
<feature type="active site" description="Nucleophile" evidence="1">
    <location>
        <position position="142"/>
    </location>
</feature>
<feature type="modified residue" description="Phosphoserine" evidence="1">
    <location>
        <position position="411"/>
    </location>
</feature>
<feature type="modified residue" description="Phosphoserine" evidence="13">
    <location>
        <position position="416"/>
    </location>
</feature>
<feature type="modified residue" description="Phosphothreonine" evidence="13">
    <location>
        <position position="422"/>
    </location>
</feature>
<feature type="splice variant" id="VSP_020114" description="In isoform 2, isoform 3 and isoform 4." evidence="8 9 10">
    <location>
        <begin position="1"/>
        <end position="30"/>
    </location>
</feature>
<feature type="splice variant" id="VSP_021791" description="In isoform 4." evidence="9">
    <location>
        <begin position="98"/>
        <end position="143"/>
    </location>
</feature>
<feature type="splice variant" id="VSP_021792" description="In isoform 3." evidence="10">
    <original>K</original>
    <variation>KPLRTSACFCLYTGFLFHW</variation>
    <location>
        <position position="143"/>
    </location>
</feature>
<feature type="sequence conflict" description="In Ref. 4; BAC40817." evidence="11" ref="4">
    <original>K</original>
    <variation>E</variation>
    <location>
        <position position="48"/>
    </location>
</feature>
<feature type="sequence conflict" description="In Ref. 4; BAC40817." evidence="11" ref="4">
    <original>G</original>
    <variation>D</variation>
    <location>
        <position position="52"/>
    </location>
</feature>
<feature type="sequence conflict" description="In Ref. 5; AAH21446." evidence="11" ref="5">
    <original>G</original>
    <variation>V</variation>
    <location>
        <position position="406"/>
    </location>
</feature>
<sequence length="423" mass="47502">MGFPRLWAALLRNWGRWTARPGPRVPGLPPMAGNKVPPALASHQPDRKGRGGWVWEETEHPAKRVKGGEDEEPPRKLPKRKIVLLMAYSGKGYHGMQRNLGSSQFRTIEDDLVSALVQAGCIPENHGTDMRKMSFQRCARTDKGVSAAGQVVSLKVWLIDDILDKINSHLPSHIRILGLKRVTGGFNSKNKCDARTYCYMLPTFAFAHKDRDVQDESYRLSAETLQQVNRLLACYKGTHNFHNFTSQKGPREPSARRYILEMYCEEPFVREGLEFAVIKVKGQSFMMHQIRKMVGLVVAIVKGYAPESVLERSWGEEKVDVPKAPGLGLVLERVHFEKYNQRFGGDGLHEPLDWTQEEGKVTAFKEQYIYPTIVSTERDERSMAQWLNTLPIHNFSGTALGAADTGAKVPSSLEGSEGDGDTD</sequence>
<dbReference type="EC" id="5.4.99.-" evidence="4 6"/>
<dbReference type="EC" id="5.4.99.12" evidence="4"/>
<dbReference type="EMBL" id="AF116237">
    <property type="protein sequence ID" value="AAD21041.1"/>
    <property type="molecule type" value="mRNA"/>
</dbReference>
<dbReference type="EMBL" id="AF269250">
    <property type="protein sequence ID" value="AAG35307.1"/>
    <property type="molecule type" value="Genomic_DNA"/>
</dbReference>
<dbReference type="EMBL" id="AF269250">
    <property type="protein sequence ID" value="AAG35308.1"/>
    <property type="molecule type" value="Genomic_DNA"/>
</dbReference>
<dbReference type="EMBL" id="AB041563">
    <property type="protein sequence ID" value="BAA95047.1"/>
    <property type="status" value="ALT_FRAME"/>
    <property type="molecule type" value="mRNA"/>
</dbReference>
<dbReference type="EMBL" id="AK089258">
    <property type="protein sequence ID" value="BAC40817.1"/>
    <property type="status" value="ALT_INIT"/>
    <property type="molecule type" value="mRNA"/>
</dbReference>
<dbReference type="EMBL" id="AK138570">
    <property type="protein sequence ID" value="BAE23701.1"/>
    <property type="molecule type" value="mRNA"/>
</dbReference>
<dbReference type="EMBL" id="BC021446">
    <property type="protein sequence ID" value="AAH21446.2"/>
    <property type="molecule type" value="mRNA"/>
</dbReference>
<dbReference type="EMBL" id="BC034359">
    <property type="protein sequence ID" value="AAH34359.2"/>
    <property type="molecule type" value="mRNA"/>
</dbReference>
<dbReference type="CCDS" id="CCDS19531.1">
    <molecule id="Q9WU56-1"/>
</dbReference>
<dbReference type="CCDS" id="CCDS39212.1">
    <molecule id="Q9WU56-2"/>
</dbReference>
<dbReference type="CCDS" id="CCDS84929.1">
    <molecule id="Q9WU56-4"/>
</dbReference>
<dbReference type="RefSeq" id="NP_001020733.1">
    <molecule id="Q9WU56-2"/>
    <property type="nucleotide sequence ID" value="NM_001025562.2"/>
</dbReference>
<dbReference type="RefSeq" id="NP_001334319.1">
    <molecule id="Q9WU56-4"/>
    <property type="nucleotide sequence ID" value="NM_001347390.1"/>
</dbReference>
<dbReference type="RefSeq" id="NP_001346147.1">
    <molecule id="Q9WU56-3"/>
    <property type="nucleotide sequence ID" value="NM_001359218.1"/>
</dbReference>
<dbReference type="RefSeq" id="NP_001346148.1">
    <molecule id="Q9WU56-2"/>
    <property type="nucleotide sequence ID" value="NM_001359219.1"/>
</dbReference>
<dbReference type="RefSeq" id="NP_062674.2">
    <molecule id="Q9WU56-1"/>
    <property type="nucleotide sequence ID" value="NM_019700.4"/>
</dbReference>
<dbReference type="RefSeq" id="XP_011247847.1">
    <property type="nucleotide sequence ID" value="XM_011249545.2"/>
</dbReference>
<dbReference type="RefSeq" id="XP_017176503.1">
    <molecule id="Q9WU56-2"/>
    <property type="nucleotide sequence ID" value="XM_017321014.2"/>
</dbReference>
<dbReference type="RefSeq" id="XP_017176504.1">
    <molecule id="Q9WU56-2"/>
    <property type="nucleotide sequence ID" value="XM_017321015.3"/>
</dbReference>
<dbReference type="RefSeq" id="XP_036021224.1">
    <molecule id="Q9WU56-3"/>
    <property type="nucleotide sequence ID" value="XM_036165331.1"/>
</dbReference>
<dbReference type="RefSeq" id="XP_036021225.1">
    <molecule id="Q9WU56-3"/>
    <property type="nucleotide sequence ID" value="XM_036165332.1"/>
</dbReference>
<dbReference type="RefSeq" id="XP_036021226.1">
    <molecule id="Q9WU56-3"/>
    <property type="nucleotide sequence ID" value="XM_036165333.1"/>
</dbReference>
<dbReference type="SMR" id="Q9WU56"/>
<dbReference type="BioGRID" id="207924">
    <property type="interactions" value="9"/>
</dbReference>
<dbReference type="CORUM" id="Q9WU56"/>
<dbReference type="FunCoup" id="Q9WU56">
    <property type="interactions" value="3885"/>
</dbReference>
<dbReference type="STRING" id="10090.ENSMUSP00000083844"/>
<dbReference type="iPTMnet" id="Q9WU56"/>
<dbReference type="PhosphoSitePlus" id="Q9WU56"/>
<dbReference type="jPOST" id="Q9WU56"/>
<dbReference type="PaxDb" id="10090-ENSMUSP00000083844"/>
<dbReference type="PeptideAtlas" id="Q9WU56"/>
<dbReference type="ProteomicsDB" id="300133">
    <molecule id="Q9WU56-1"/>
</dbReference>
<dbReference type="ProteomicsDB" id="300134">
    <molecule id="Q9WU56-2"/>
</dbReference>
<dbReference type="ProteomicsDB" id="300135">
    <molecule id="Q9WU56-3"/>
</dbReference>
<dbReference type="ProteomicsDB" id="300136">
    <molecule id="Q9WU56-4"/>
</dbReference>
<dbReference type="Pumba" id="Q9WU56"/>
<dbReference type="Antibodypedia" id="32008">
    <property type="antibodies" value="169 antibodies from 28 providers"/>
</dbReference>
<dbReference type="DNASU" id="56361"/>
<dbReference type="Ensembl" id="ENSMUST00000031481.13">
    <molecule id="Q9WU56-2"/>
    <property type="protein sequence ID" value="ENSMUSP00000031481.7"/>
    <property type="gene ID" value="ENSMUSG00000029507.17"/>
</dbReference>
<dbReference type="Ensembl" id="ENSMUST00000031483.15">
    <molecule id="Q9WU56-1"/>
    <property type="protein sequence ID" value="ENSMUSP00000031483.9"/>
    <property type="gene ID" value="ENSMUSG00000029507.17"/>
</dbReference>
<dbReference type="Ensembl" id="ENSMUST00000112426.8">
    <molecule id="Q9WU56-4"/>
    <property type="protein sequence ID" value="ENSMUSP00000108045.2"/>
    <property type="gene ID" value="ENSMUSG00000029507.17"/>
</dbReference>
<dbReference type="Ensembl" id="ENSMUST00000170468.8">
    <molecule id="Q9WU56-2"/>
    <property type="protein sequence ID" value="ENSMUSP00000130814.2"/>
    <property type="gene ID" value="ENSMUSG00000029507.17"/>
</dbReference>
<dbReference type="GeneID" id="56361"/>
<dbReference type="KEGG" id="mmu:56361"/>
<dbReference type="UCSC" id="uc008yrm.1">
    <molecule id="Q9WU56-4"/>
    <property type="organism name" value="mouse"/>
</dbReference>
<dbReference type="UCSC" id="uc008yrn.1">
    <molecule id="Q9WU56-1"/>
    <property type="organism name" value="mouse"/>
</dbReference>
<dbReference type="AGR" id="MGI:1929237"/>
<dbReference type="CTD" id="80324"/>
<dbReference type="MGI" id="MGI:1929237">
    <property type="gene designation" value="Pus1"/>
</dbReference>
<dbReference type="VEuPathDB" id="HostDB:ENSMUSG00000029507"/>
<dbReference type="eggNOG" id="KOG2553">
    <property type="taxonomic scope" value="Eukaryota"/>
</dbReference>
<dbReference type="GeneTree" id="ENSGT00950000183160"/>
<dbReference type="HOGENOM" id="CLU_021971_3_0_1"/>
<dbReference type="InParanoid" id="Q9WU56"/>
<dbReference type="OrthoDB" id="10256309at2759"/>
<dbReference type="PhylomeDB" id="Q9WU56"/>
<dbReference type="BRENDA" id="4.2.1.70">
    <property type="organism ID" value="3474"/>
</dbReference>
<dbReference type="BRENDA" id="5.4.99.B22">
    <property type="organism ID" value="3474"/>
</dbReference>
<dbReference type="BioGRID-ORCS" id="56361">
    <property type="hits" value="3 hits in 78 CRISPR screens"/>
</dbReference>
<dbReference type="ChiTaRS" id="Pus1">
    <property type="organism name" value="mouse"/>
</dbReference>
<dbReference type="PRO" id="PR:Q9WU56"/>
<dbReference type="Proteomes" id="UP000000589">
    <property type="component" value="Chromosome 5"/>
</dbReference>
<dbReference type="RNAct" id="Q9WU56">
    <property type="molecule type" value="protein"/>
</dbReference>
<dbReference type="Bgee" id="ENSMUSG00000029507">
    <property type="expression patterns" value="Expressed in ectoplacental cone and 221 other cell types or tissues"/>
</dbReference>
<dbReference type="ExpressionAtlas" id="Q9WU56">
    <property type="expression patterns" value="baseline and differential"/>
</dbReference>
<dbReference type="GO" id="GO:0005739">
    <property type="term" value="C:mitochondrion"/>
    <property type="evidence" value="ECO:0007669"/>
    <property type="project" value="UniProtKB-SubCell"/>
</dbReference>
<dbReference type="GO" id="GO:0005730">
    <property type="term" value="C:nucleolus"/>
    <property type="evidence" value="ECO:0000314"/>
    <property type="project" value="MGI"/>
</dbReference>
<dbReference type="GO" id="GO:0005654">
    <property type="term" value="C:nucleoplasm"/>
    <property type="evidence" value="ECO:0007669"/>
    <property type="project" value="Ensembl"/>
</dbReference>
<dbReference type="GO" id="GO:0005634">
    <property type="term" value="C:nucleus"/>
    <property type="evidence" value="ECO:0000314"/>
    <property type="project" value="MGI"/>
</dbReference>
<dbReference type="GO" id="GO:0005667">
    <property type="term" value="C:transcription regulator complex"/>
    <property type="evidence" value="ECO:0000314"/>
    <property type="project" value="MGI"/>
</dbReference>
<dbReference type="GO" id="GO:0003682">
    <property type="term" value="F:chromatin binding"/>
    <property type="evidence" value="ECO:0000314"/>
    <property type="project" value="MGI"/>
</dbReference>
<dbReference type="GO" id="GO:0009982">
    <property type="term" value="F:pseudouridine synthase activity"/>
    <property type="evidence" value="ECO:0000314"/>
    <property type="project" value="MGI"/>
</dbReference>
<dbReference type="GO" id="GO:0002153">
    <property type="term" value="F:steroid receptor RNA activator RNA binding"/>
    <property type="evidence" value="ECO:0000250"/>
    <property type="project" value="UniProtKB"/>
</dbReference>
<dbReference type="GO" id="GO:0003713">
    <property type="term" value="F:transcription coactivator activity"/>
    <property type="evidence" value="ECO:0000314"/>
    <property type="project" value="MGI"/>
</dbReference>
<dbReference type="GO" id="GO:0000049">
    <property type="term" value="F:tRNA binding"/>
    <property type="evidence" value="ECO:0000250"/>
    <property type="project" value="UniProtKB"/>
</dbReference>
<dbReference type="GO" id="GO:0106029">
    <property type="term" value="F:tRNA pseudouridine synthase activity"/>
    <property type="evidence" value="ECO:0000314"/>
    <property type="project" value="UniProtKB"/>
</dbReference>
<dbReference type="GO" id="GO:0160147">
    <property type="term" value="F:tRNA pseudouridine(38-40) synthase activity"/>
    <property type="evidence" value="ECO:0007669"/>
    <property type="project" value="UniProtKB-EC"/>
</dbReference>
<dbReference type="GO" id="GO:0006397">
    <property type="term" value="P:mRNA processing"/>
    <property type="evidence" value="ECO:0007669"/>
    <property type="project" value="UniProtKB-KW"/>
</dbReference>
<dbReference type="GO" id="GO:1990481">
    <property type="term" value="P:mRNA pseudouridine synthesis"/>
    <property type="evidence" value="ECO:0007669"/>
    <property type="project" value="Ensembl"/>
</dbReference>
<dbReference type="GO" id="GO:0045944">
    <property type="term" value="P:positive regulation of transcription by RNA polymerase II"/>
    <property type="evidence" value="ECO:0000314"/>
    <property type="project" value="MGI"/>
</dbReference>
<dbReference type="GO" id="GO:0008380">
    <property type="term" value="P:RNA splicing"/>
    <property type="evidence" value="ECO:0007669"/>
    <property type="project" value="UniProtKB-KW"/>
</dbReference>
<dbReference type="GO" id="GO:0031119">
    <property type="term" value="P:tRNA pseudouridine synthesis"/>
    <property type="evidence" value="ECO:0000314"/>
    <property type="project" value="UniProtKB"/>
</dbReference>
<dbReference type="CDD" id="cd02568">
    <property type="entry name" value="PseudoU_synth_PUS1_PUS2"/>
    <property type="match status" value="1"/>
</dbReference>
<dbReference type="FunFam" id="3.30.70.580:FF:000002">
    <property type="entry name" value="tRNA pseudouridine synthase"/>
    <property type="match status" value="1"/>
</dbReference>
<dbReference type="FunFam" id="3.30.70.660:FF:000002">
    <property type="entry name" value="tRNA pseudouridine synthase"/>
    <property type="match status" value="1"/>
</dbReference>
<dbReference type="Gene3D" id="3.30.70.660">
    <property type="entry name" value="Pseudouridine synthase I, catalytic domain, C-terminal subdomain"/>
    <property type="match status" value="1"/>
</dbReference>
<dbReference type="Gene3D" id="3.30.70.580">
    <property type="entry name" value="Pseudouridine synthase I, catalytic domain, N-terminal subdomain"/>
    <property type="match status" value="1"/>
</dbReference>
<dbReference type="InterPro" id="IPR020103">
    <property type="entry name" value="PsdUridine_synth_cat_dom_sf"/>
</dbReference>
<dbReference type="InterPro" id="IPR001406">
    <property type="entry name" value="PsdUridine_synth_TruA"/>
</dbReference>
<dbReference type="InterPro" id="IPR020097">
    <property type="entry name" value="PsdUridine_synth_TruA_a/b_dom"/>
</dbReference>
<dbReference type="InterPro" id="IPR020095">
    <property type="entry name" value="PsdUridine_synth_TruA_C"/>
</dbReference>
<dbReference type="InterPro" id="IPR041708">
    <property type="entry name" value="PUS1/PUS2-like"/>
</dbReference>
<dbReference type="InterPro" id="IPR020094">
    <property type="entry name" value="TruA/RsuA/RluB/E/F_N"/>
</dbReference>
<dbReference type="NCBIfam" id="TIGR00071">
    <property type="entry name" value="hisT_truA"/>
    <property type="match status" value="1"/>
</dbReference>
<dbReference type="PANTHER" id="PTHR11142">
    <property type="entry name" value="PSEUDOURIDYLATE SYNTHASE"/>
    <property type="match status" value="1"/>
</dbReference>
<dbReference type="PANTHER" id="PTHR11142:SF4">
    <property type="entry name" value="PSEUDOURIDYLATE SYNTHASE 1 HOMOLOG"/>
    <property type="match status" value="1"/>
</dbReference>
<dbReference type="Pfam" id="PF01416">
    <property type="entry name" value="PseudoU_synth_1"/>
    <property type="match status" value="1"/>
</dbReference>
<dbReference type="SUPFAM" id="SSF55120">
    <property type="entry name" value="Pseudouridine synthase"/>
    <property type="match status" value="1"/>
</dbReference>
<accession>Q9WU56</accession>
<accession>Q3UUC6</accession>
<accession>Q791J1</accession>
<accession>Q8C250</accession>
<accession>Q8VDQ3</accession>
<accession>Q9EQD1</accession>
<accession>Q9JJE5</accession>